<accession>Q9Z2Z7</accession>
<dbReference type="EC" id="2.7.8.5"/>
<dbReference type="EMBL" id="AB016930">
    <property type="protein sequence ID" value="BAA37113.1"/>
    <property type="molecule type" value="mRNA"/>
</dbReference>
<dbReference type="RefSeq" id="NP_001233637.1">
    <property type="nucleotide sequence ID" value="NM_001246708.1"/>
</dbReference>
<dbReference type="SMR" id="Q9Z2Z7"/>
<dbReference type="SwissLipids" id="SLP:000000226"/>
<dbReference type="PaxDb" id="10029-NP_001233637.1"/>
<dbReference type="Ensembl" id="ENSCGRT00001024102.1">
    <property type="protein sequence ID" value="ENSCGRP00001019858.1"/>
    <property type="gene ID" value="ENSCGRG00001019173.1"/>
</dbReference>
<dbReference type="GeneID" id="100689449"/>
<dbReference type="KEGG" id="cge:100689449"/>
<dbReference type="CTD" id="9489"/>
<dbReference type="eggNOG" id="KOG3964">
    <property type="taxonomic scope" value="Eukaryota"/>
</dbReference>
<dbReference type="GeneTree" id="ENSGT00390000002373"/>
<dbReference type="OrthoDB" id="10250191at2759"/>
<dbReference type="BRENDA" id="2.7.8.5">
    <property type="organism ID" value="1309"/>
</dbReference>
<dbReference type="UniPathway" id="UPA00084">
    <property type="reaction ID" value="UER00503"/>
</dbReference>
<dbReference type="Proteomes" id="UP000694386">
    <property type="component" value="Unplaced"/>
</dbReference>
<dbReference type="Proteomes" id="UP001108280">
    <property type="component" value="Chromosome 7"/>
</dbReference>
<dbReference type="GO" id="GO:0005783">
    <property type="term" value="C:endoplasmic reticulum"/>
    <property type="evidence" value="ECO:0007669"/>
    <property type="project" value="Ensembl"/>
</dbReference>
<dbReference type="GO" id="GO:0005743">
    <property type="term" value="C:mitochondrial inner membrane"/>
    <property type="evidence" value="ECO:0000304"/>
    <property type="project" value="BHF-UCL"/>
</dbReference>
<dbReference type="GO" id="GO:0005739">
    <property type="term" value="C:mitochondrion"/>
    <property type="evidence" value="ECO:0000314"/>
    <property type="project" value="BHF-UCL"/>
</dbReference>
<dbReference type="GO" id="GO:0005524">
    <property type="term" value="F:ATP binding"/>
    <property type="evidence" value="ECO:0007669"/>
    <property type="project" value="UniProtKB-KW"/>
</dbReference>
<dbReference type="GO" id="GO:0005509">
    <property type="term" value="F:calcium ion binding"/>
    <property type="evidence" value="ECO:0000314"/>
    <property type="project" value="BHF-UCL"/>
</dbReference>
<dbReference type="GO" id="GO:0008444">
    <property type="term" value="F:CDP-diacylglycerol-glycerol-3-phosphate 3-phosphatidyltransferase activity"/>
    <property type="evidence" value="ECO:0000314"/>
    <property type="project" value="BHF-UCL"/>
</dbReference>
<dbReference type="GO" id="GO:0032049">
    <property type="term" value="P:cardiolipin biosynthetic process"/>
    <property type="evidence" value="ECO:0000315"/>
    <property type="project" value="BHF-UCL"/>
</dbReference>
<dbReference type="GO" id="GO:0046339">
    <property type="term" value="P:diacylglycerol metabolic process"/>
    <property type="evidence" value="ECO:0000314"/>
    <property type="project" value="BHF-UCL"/>
</dbReference>
<dbReference type="GO" id="GO:0006655">
    <property type="term" value="P:phosphatidylglycerol biosynthetic process"/>
    <property type="evidence" value="ECO:0000314"/>
    <property type="project" value="BHF-UCL"/>
</dbReference>
<dbReference type="GO" id="GO:0008654">
    <property type="term" value="P:phospholipid biosynthetic process"/>
    <property type="evidence" value="ECO:0000314"/>
    <property type="project" value="HGNC-UCL"/>
</dbReference>
<dbReference type="CDD" id="cd09135">
    <property type="entry name" value="PLDc_PGS1_euk_1"/>
    <property type="match status" value="1"/>
</dbReference>
<dbReference type="CDD" id="cd09137">
    <property type="entry name" value="PLDc_PGS1_euk_2"/>
    <property type="match status" value="1"/>
</dbReference>
<dbReference type="FunFam" id="3.30.870.10:FF:000023">
    <property type="entry name" value="CDP-diacylglycerol--glycerol-3-phosphate 3-phosphatidyltransferase"/>
    <property type="match status" value="1"/>
</dbReference>
<dbReference type="FunFam" id="3.30.870.10:FF:000026">
    <property type="entry name" value="CDP-diacylglycerol--glycerol-3-phosphate 3-phosphatidyltransferase"/>
    <property type="match status" value="1"/>
</dbReference>
<dbReference type="Gene3D" id="3.30.870.10">
    <property type="entry name" value="Endonuclease Chain A"/>
    <property type="match status" value="2"/>
</dbReference>
<dbReference type="InterPro" id="IPR016270">
    <property type="entry name" value="PGS1"/>
</dbReference>
<dbReference type="InterPro" id="IPR001736">
    <property type="entry name" value="PLipase_D/transphosphatidylase"/>
</dbReference>
<dbReference type="PANTHER" id="PTHR12586:SF1">
    <property type="entry name" value="CDP-DIACYLGLYCEROL--GLYCEROL-3-PHOSPHATE 3-PHOSPHATIDYLTRANSFERASE, MITOCHONDRIAL"/>
    <property type="match status" value="1"/>
</dbReference>
<dbReference type="PANTHER" id="PTHR12586">
    <property type="entry name" value="CDP-DIACYLGLYCEROL--SERINE O-PHOSPHATIDYLTRANSFERASE"/>
    <property type="match status" value="1"/>
</dbReference>
<dbReference type="PIRSF" id="PIRSF000850">
    <property type="entry name" value="Phospholipase_D_PSS"/>
    <property type="match status" value="1"/>
</dbReference>
<dbReference type="SUPFAM" id="SSF56024">
    <property type="entry name" value="Phospholipase D/nuclease"/>
    <property type="match status" value="1"/>
</dbReference>
<dbReference type="PROSITE" id="PS50035">
    <property type="entry name" value="PLD"/>
    <property type="match status" value="1"/>
</dbReference>
<name>PGPS1_CRIGR</name>
<sequence length="553" mass="62369">MAAPAAGPVFWRRLLGLLPGRPGLAALLGRLSDRLGRSRERRRRRSPWLLLAPLLSPTVPQVTSPPCCLCPEGVHRFQWIRNLVPEFGVSSSHVRVLSSPAEFFELLKGQIKMAKRRVVMASLYLGTGPLEQELVDCLESSLEKSLQSKFPSDLKVSILLDFTRGSRGRKNSRTMLLPLLQRFPEHVRVSLFHTPNLRGLLRLLIPERFNETIGLQHIKVYLFDNNVVLSGANLSDSYFTNRQDRYVFLQDCAEIADFFTELVDAVGDVSLQLQGDDTVDVVDGMVHPYKGDRAAYCRAANKRVMDVIHSARTRQQLLHAQTFHSDSLLSQEEAAAAGDRRPAPDTWIYPLIQMKPFEIQIDEIVTETLLTEAERGAKVFLTTGYFNLTQAYMDLVLGTRAEYQILLASPEVNGFFGAKGVAGAIPAAYVHIERQFYGEVCGLGQQDRVQLQEYWRTGWTFHAKGLWLYLAGSSLPCLTLIGSPNFGYRSVHRDLEAQIAIVTESRALQQQLHQEQEQLYLRSSVVTSATFEQPGRQVKLWVKMVTPLIKNFF</sequence>
<reference key="1">
    <citation type="journal article" date="1999" name="J. Biol. Chem.">
        <title>Isolation of a chinese hamster ovary (CHO) cDNA encoding phosphatidylglycerophosphate (PGP) synthase, expression of which corrects the mitochondrial abnormalities of a PGP synthase-defective mutant of CHO-K1 cells.</title>
        <authorList>
            <person name="Kawasaki K."/>
            <person name="Kuge O."/>
            <person name="Chang S.-C."/>
            <person name="Heacock P.N."/>
            <person name="Rho M."/>
            <person name="Suzuki K."/>
            <person name="Nishijima M."/>
            <person name="Dowhan W."/>
        </authorList>
    </citation>
    <scope>NUCLEOTIDE SEQUENCE [MRNA]</scope>
    <scope>FUNCTION</scope>
    <scope>CATALYTIC ACTIVITY</scope>
    <source>
        <tissue>Ovary</tissue>
    </source>
</reference>
<reference key="2">
    <citation type="journal article" date="2001" name="Biochem. J.">
        <title>Purification of phosphatidylglycerophosphate synthase from Chinese hamster ovary cells.</title>
        <authorList>
            <person name="Kawasaki K."/>
            <person name="Kuge O."/>
            <person name="Yamakawa Y."/>
            <person name="Nishijima M."/>
        </authorList>
    </citation>
    <scope>SUBCELLULAR LOCATION</scope>
    <scope>CATALYTIC ACTIVITY</scope>
    <scope>BIOPHYSICOCHEMICAL PROPERTIES</scope>
    <scope>ACTIVITY REGULATION</scope>
</reference>
<proteinExistence type="evidence at protein level"/>
<keyword id="KW-0067">ATP-binding</keyword>
<keyword id="KW-0444">Lipid biosynthesis</keyword>
<keyword id="KW-0443">Lipid metabolism</keyword>
<keyword id="KW-0496">Mitochondrion</keyword>
<keyword id="KW-0547">Nucleotide-binding</keyword>
<keyword id="KW-0594">Phospholipid biosynthesis</keyword>
<keyword id="KW-1208">Phospholipid metabolism</keyword>
<keyword id="KW-0597">Phosphoprotein</keyword>
<keyword id="KW-0677">Repeat</keyword>
<keyword id="KW-0808">Transferase</keyword>
<keyword id="KW-0809">Transit peptide</keyword>
<gene>
    <name type="primary">PGS1</name>
</gene>
<comment type="function">
    <text evidence="5">Functions in the biosynthesis of the anionic phospholipids phosphatidylglycerol and cardiolipin.</text>
</comment>
<comment type="catalytic activity">
    <reaction evidence="4 5">
        <text>a CDP-1,2-diacyl-sn-glycerol + sn-glycerol 3-phosphate = a 1,2-diacyl-sn-glycero-3-phospho-(1'-sn-glycero-3'-phosphate) + CMP + H(+)</text>
        <dbReference type="Rhea" id="RHEA:12593"/>
        <dbReference type="ChEBI" id="CHEBI:15378"/>
        <dbReference type="ChEBI" id="CHEBI:57597"/>
        <dbReference type="ChEBI" id="CHEBI:58332"/>
        <dbReference type="ChEBI" id="CHEBI:60110"/>
        <dbReference type="ChEBI" id="CHEBI:60377"/>
        <dbReference type="EC" id="2.7.8.5"/>
    </reaction>
</comment>
<comment type="activity regulation">
    <text evidence="4">Activated by calcium and magnesium and inhibited by other bivalent cations.</text>
</comment>
<comment type="biophysicochemical properties">
    <kinetics>
        <KM evidence="4">288 uM for CDP-diacylglycerol</KM>
        <Vmax evidence="4">13.6 umol/min/mg enzyme</Vmax>
    </kinetics>
</comment>
<comment type="pathway">
    <text>Phospholipid metabolism; phosphatidylglycerol biosynthesis; phosphatidylglycerol from CDP-diacylglycerol: step 1/2.</text>
</comment>
<comment type="subcellular location">
    <subcellularLocation>
        <location evidence="4">Mitochondrion</location>
    </subcellularLocation>
</comment>
<comment type="similarity">
    <text evidence="6">Belongs to the CDP-alcohol phosphatidyltransferase class-II family.</text>
</comment>
<feature type="transit peptide" description="Mitochondrion" evidence="2">
    <location>
        <begin position="1"/>
        <end position="25"/>
    </location>
</feature>
<feature type="chain" id="PRO_0000337106" description="CDP-diacylglycerol--glycerol-3-phosphate 3-phosphatidyltransferase, mitochondrial">
    <location>
        <begin position="26"/>
        <end position="553"/>
    </location>
</feature>
<feature type="domain" description="PLD phosphodiesterase 1" evidence="3">
    <location>
        <begin position="212"/>
        <end position="238"/>
    </location>
</feature>
<feature type="domain" description="PLD phosphodiesterase 2" evidence="3">
    <location>
        <begin position="457"/>
        <end position="490"/>
    </location>
</feature>
<feature type="active site" evidence="3">
    <location>
        <position position="217"/>
    </location>
</feature>
<feature type="active site" evidence="3">
    <location>
        <position position="219"/>
    </location>
</feature>
<feature type="active site" evidence="3">
    <location>
        <position position="224"/>
    </location>
</feature>
<feature type="binding site" evidence="2">
    <location>
        <begin position="121"/>
        <end position="128"/>
    </location>
    <ligand>
        <name>ATP</name>
        <dbReference type="ChEBI" id="CHEBI:30616"/>
    </ligand>
</feature>
<feature type="modified residue" description="Phosphoserine" evidence="1">
    <location>
        <position position="46"/>
    </location>
</feature>
<organism>
    <name type="scientific">Cricetulus griseus</name>
    <name type="common">Chinese hamster</name>
    <name type="synonym">Cricetulus barabensis griseus</name>
    <dbReference type="NCBI Taxonomy" id="10029"/>
    <lineage>
        <taxon>Eukaryota</taxon>
        <taxon>Metazoa</taxon>
        <taxon>Chordata</taxon>
        <taxon>Craniata</taxon>
        <taxon>Vertebrata</taxon>
        <taxon>Euteleostomi</taxon>
        <taxon>Mammalia</taxon>
        <taxon>Eutheria</taxon>
        <taxon>Euarchontoglires</taxon>
        <taxon>Glires</taxon>
        <taxon>Rodentia</taxon>
        <taxon>Myomorpha</taxon>
        <taxon>Muroidea</taxon>
        <taxon>Cricetidae</taxon>
        <taxon>Cricetinae</taxon>
        <taxon>Cricetulus</taxon>
    </lineage>
</organism>
<protein>
    <recommendedName>
        <fullName>CDP-diacylglycerol--glycerol-3-phosphate 3-phosphatidyltransferase, mitochondrial</fullName>
        <ecNumber>2.7.8.5</ecNumber>
    </recommendedName>
    <alternativeName>
        <fullName>Phosphatidylglycerophosphate synthase 1</fullName>
        <shortName>PGP synthase 1</shortName>
    </alternativeName>
</protein>
<evidence type="ECO:0000250" key="1">
    <source>
        <dbReference type="UniProtKB" id="Q8BHF7"/>
    </source>
</evidence>
<evidence type="ECO:0000255" key="2"/>
<evidence type="ECO:0000255" key="3">
    <source>
        <dbReference type="PROSITE-ProRule" id="PRU00153"/>
    </source>
</evidence>
<evidence type="ECO:0000269" key="4">
    <source>
    </source>
</evidence>
<evidence type="ECO:0000269" key="5">
    <source>
    </source>
</evidence>
<evidence type="ECO:0000305" key="6"/>